<proteinExistence type="inferred from homology"/>
<keyword id="KW-0687">Ribonucleoprotein</keyword>
<keyword id="KW-0689">Ribosomal protein</keyword>
<protein>
    <recommendedName>
        <fullName evidence="1">Large ribosomal subunit protein bL19</fullName>
    </recommendedName>
    <alternativeName>
        <fullName evidence="2">50S ribosomal protein L19</fullName>
    </alternativeName>
</protein>
<evidence type="ECO:0000255" key="1">
    <source>
        <dbReference type="HAMAP-Rule" id="MF_00402"/>
    </source>
</evidence>
<evidence type="ECO:0000305" key="2"/>
<reference key="1">
    <citation type="submission" date="2007-04" db="EMBL/GenBank/DDBJ databases">
        <title>Complete sequence of chromosome of Rhodobacter sphaeroides ATCC 17025.</title>
        <authorList>
            <consortium name="US DOE Joint Genome Institute"/>
            <person name="Copeland A."/>
            <person name="Lucas S."/>
            <person name="Lapidus A."/>
            <person name="Barry K."/>
            <person name="Detter J.C."/>
            <person name="Glavina del Rio T."/>
            <person name="Hammon N."/>
            <person name="Israni S."/>
            <person name="Dalin E."/>
            <person name="Tice H."/>
            <person name="Pitluck S."/>
            <person name="Chertkov O."/>
            <person name="Brettin T."/>
            <person name="Bruce D."/>
            <person name="Han C."/>
            <person name="Schmutz J."/>
            <person name="Larimer F."/>
            <person name="Land M."/>
            <person name="Hauser L."/>
            <person name="Kyrpides N."/>
            <person name="Kim E."/>
            <person name="Richardson P."/>
            <person name="Mackenzie C."/>
            <person name="Choudhary M."/>
            <person name="Donohue T.J."/>
            <person name="Kaplan S."/>
        </authorList>
    </citation>
    <scope>NUCLEOTIDE SEQUENCE [LARGE SCALE GENOMIC DNA]</scope>
    <source>
        <strain>ATCC 17025 / ATH 2.4.3</strain>
    </source>
</reference>
<name>RL19_CERS5</name>
<dbReference type="EMBL" id="CP000661">
    <property type="protein sequence ID" value="ABP69095.1"/>
    <property type="molecule type" value="Genomic_DNA"/>
</dbReference>
<dbReference type="SMR" id="A4WNY1"/>
<dbReference type="STRING" id="349102.Rsph17025_0185"/>
<dbReference type="KEGG" id="rsq:Rsph17025_0185"/>
<dbReference type="eggNOG" id="COG0335">
    <property type="taxonomic scope" value="Bacteria"/>
</dbReference>
<dbReference type="HOGENOM" id="CLU_103507_0_2_5"/>
<dbReference type="BioCyc" id="RSPH349102:G1G8M-190-MONOMER"/>
<dbReference type="GO" id="GO:0022625">
    <property type="term" value="C:cytosolic large ribosomal subunit"/>
    <property type="evidence" value="ECO:0007669"/>
    <property type="project" value="TreeGrafter"/>
</dbReference>
<dbReference type="GO" id="GO:0003735">
    <property type="term" value="F:structural constituent of ribosome"/>
    <property type="evidence" value="ECO:0007669"/>
    <property type="project" value="InterPro"/>
</dbReference>
<dbReference type="GO" id="GO:0006412">
    <property type="term" value="P:translation"/>
    <property type="evidence" value="ECO:0007669"/>
    <property type="project" value="UniProtKB-UniRule"/>
</dbReference>
<dbReference type="FunFam" id="2.30.30.790:FF:000001">
    <property type="entry name" value="50S ribosomal protein L19"/>
    <property type="match status" value="1"/>
</dbReference>
<dbReference type="Gene3D" id="2.30.30.790">
    <property type="match status" value="1"/>
</dbReference>
<dbReference type="HAMAP" id="MF_00402">
    <property type="entry name" value="Ribosomal_bL19"/>
    <property type="match status" value="1"/>
</dbReference>
<dbReference type="InterPro" id="IPR001857">
    <property type="entry name" value="Ribosomal_bL19"/>
</dbReference>
<dbReference type="InterPro" id="IPR018257">
    <property type="entry name" value="Ribosomal_bL19_CS"/>
</dbReference>
<dbReference type="InterPro" id="IPR038657">
    <property type="entry name" value="Ribosomal_bL19_sf"/>
</dbReference>
<dbReference type="InterPro" id="IPR008991">
    <property type="entry name" value="Translation_prot_SH3-like_sf"/>
</dbReference>
<dbReference type="NCBIfam" id="TIGR01024">
    <property type="entry name" value="rplS_bact"/>
    <property type="match status" value="1"/>
</dbReference>
<dbReference type="PANTHER" id="PTHR15680:SF9">
    <property type="entry name" value="LARGE RIBOSOMAL SUBUNIT PROTEIN BL19M"/>
    <property type="match status" value="1"/>
</dbReference>
<dbReference type="PANTHER" id="PTHR15680">
    <property type="entry name" value="RIBOSOMAL PROTEIN L19"/>
    <property type="match status" value="1"/>
</dbReference>
<dbReference type="Pfam" id="PF01245">
    <property type="entry name" value="Ribosomal_L19"/>
    <property type="match status" value="1"/>
</dbReference>
<dbReference type="PIRSF" id="PIRSF002191">
    <property type="entry name" value="Ribosomal_L19"/>
    <property type="match status" value="1"/>
</dbReference>
<dbReference type="PRINTS" id="PR00061">
    <property type="entry name" value="RIBOSOMALL19"/>
</dbReference>
<dbReference type="SUPFAM" id="SSF50104">
    <property type="entry name" value="Translation proteins SH3-like domain"/>
    <property type="match status" value="1"/>
</dbReference>
<dbReference type="PROSITE" id="PS01015">
    <property type="entry name" value="RIBOSOMAL_L19"/>
    <property type="match status" value="1"/>
</dbReference>
<feature type="chain" id="PRO_1000049730" description="Large ribosomal subunit protein bL19">
    <location>
        <begin position="1"/>
        <end position="124"/>
    </location>
</feature>
<organism>
    <name type="scientific">Cereibacter sphaeroides (strain ATCC 17025 / ATH 2.4.3)</name>
    <name type="common">Rhodobacter sphaeroides</name>
    <dbReference type="NCBI Taxonomy" id="349102"/>
    <lineage>
        <taxon>Bacteria</taxon>
        <taxon>Pseudomonadati</taxon>
        <taxon>Pseudomonadota</taxon>
        <taxon>Alphaproteobacteria</taxon>
        <taxon>Rhodobacterales</taxon>
        <taxon>Paracoccaceae</taxon>
        <taxon>Cereibacter</taxon>
    </lineage>
</organism>
<gene>
    <name evidence="1" type="primary">rplS</name>
    <name type="ordered locus">Rsph17025_0185</name>
</gene>
<comment type="function">
    <text evidence="1">This protein is located at the 30S-50S ribosomal subunit interface and may play a role in the structure and function of the aminoacyl-tRNA binding site.</text>
</comment>
<comment type="similarity">
    <text evidence="1">Belongs to the bacterial ribosomal protein bL19 family.</text>
</comment>
<accession>A4WNY1</accession>
<sequence>MNLIAQLEAEQIAALGKTIPDFKAGDTVRVGYKVTEGTRSRVQNYEGVVIGRKGGNTISASFTVRKISFGEGVERVFPLYSTNIDSIEVVRRGRVRRAKLYYLRSRRGKSARIAEVTNYKEKSE</sequence>